<name>RK22_SPIMX</name>
<gene>
    <name type="primary">rpl22</name>
</gene>
<accession>O98454</accession>
<dbReference type="EMBL" id="AF050665">
    <property type="protein sequence ID" value="AAC95310.1"/>
    <property type="molecule type" value="Genomic_DNA"/>
</dbReference>
<dbReference type="RefSeq" id="YP_009258386.1">
    <property type="nucleotide sequence ID" value="NC_030355.1"/>
</dbReference>
<dbReference type="SMR" id="O98454"/>
<dbReference type="GeneID" id="27984753"/>
<dbReference type="GO" id="GO:0009507">
    <property type="term" value="C:chloroplast"/>
    <property type="evidence" value="ECO:0007669"/>
    <property type="project" value="UniProtKB-SubCell"/>
</dbReference>
<dbReference type="GO" id="GO:0015934">
    <property type="term" value="C:large ribosomal subunit"/>
    <property type="evidence" value="ECO:0007669"/>
    <property type="project" value="InterPro"/>
</dbReference>
<dbReference type="GO" id="GO:0019843">
    <property type="term" value="F:rRNA binding"/>
    <property type="evidence" value="ECO:0007669"/>
    <property type="project" value="UniProtKB-UniRule"/>
</dbReference>
<dbReference type="GO" id="GO:0003735">
    <property type="term" value="F:structural constituent of ribosome"/>
    <property type="evidence" value="ECO:0007669"/>
    <property type="project" value="InterPro"/>
</dbReference>
<dbReference type="GO" id="GO:0006412">
    <property type="term" value="P:translation"/>
    <property type="evidence" value="ECO:0007669"/>
    <property type="project" value="UniProtKB-UniRule"/>
</dbReference>
<dbReference type="CDD" id="cd00336">
    <property type="entry name" value="Ribosomal_L22"/>
    <property type="match status" value="1"/>
</dbReference>
<dbReference type="Gene3D" id="3.90.470.10">
    <property type="entry name" value="Ribosomal protein L22/L17"/>
    <property type="match status" value="1"/>
</dbReference>
<dbReference type="HAMAP" id="MF_01331_B">
    <property type="entry name" value="Ribosomal_uL22_B"/>
    <property type="match status" value="1"/>
</dbReference>
<dbReference type="InterPro" id="IPR001063">
    <property type="entry name" value="Ribosomal_uL22"/>
</dbReference>
<dbReference type="InterPro" id="IPR005727">
    <property type="entry name" value="Ribosomal_uL22_bac/chlpt-type"/>
</dbReference>
<dbReference type="InterPro" id="IPR047867">
    <property type="entry name" value="Ribosomal_uL22_bac/org-type"/>
</dbReference>
<dbReference type="InterPro" id="IPR036394">
    <property type="entry name" value="Ribosomal_uL22_sf"/>
</dbReference>
<dbReference type="NCBIfam" id="TIGR01044">
    <property type="entry name" value="rplV_bact"/>
    <property type="match status" value="1"/>
</dbReference>
<dbReference type="PANTHER" id="PTHR13501">
    <property type="entry name" value="CHLOROPLAST 50S RIBOSOMAL PROTEIN L22-RELATED"/>
    <property type="match status" value="1"/>
</dbReference>
<dbReference type="PANTHER" id="PTHR13501:SF10">
    <property type="entry name" value="LARGE RIBOSOMAL SUBUNIT PROTEIN UL22M"/>
    <property type="match status" value="1"/>
</dbReference>
<dbReference type="Pfam" id="PF00237">
    <property type="entry name" value="Ribosomal_L22"/>
    <property type="match status" value="1"/>
</dbReference>
<dbReference type="SUPFAM" id="SSF54843">
    <property type="entry name" value="Ribosomal protein L22"/>
    <property type="match status" value="1"/>
</dbReference>
<protein>
    <recommendedName>
        <fullName evidence="2">Large ribosomal subunit protein uL22c</fullName>
    </recommendedName>
    <alternativeName>
        <fullName>50S ribosomal protein L22, chloroplastic</fullName>
    </alternativeName>
</protein>
<reference key="1">
    <citation type="submission" date="1998-02" db="EMBL/GenBank/DDBJ databases">
        <title>Chloroplast rpl23 gene cluster of Spirogyra maxima (Charophyceae), shared by land plants.</title>
        <authorList>
            <person name="Lee J."/>
            <person name="Manhart J.R."/>
        </authorList>
    </citation>
    <scope>NUCLEOTIDE SEQUENCE [GENOMIC DNA]</scope>
    <source>
        <strain>UTEX LB 2495</strain>
    </source>
</reference>
<evidence type="ECO:0000250" key="1"/>
<evidence type="ECO:0000305" key="2"/>
<sequence>MIQMNDSKLEVLALGKNIRMSPHKVRKVIDQIRGRSYEEALMLLTFMPYRACDPILKVVCSAAANASHNFGFRKSTLYISEAKVDKGPLFKRFRPRAQGRGFPISKPTCYITIVITSRT</sequence>
<keyword id="KW-0150">Chloroplast</keyword>
<keyword id="KW-0934">Plastid</keyword>
<keyword id="KW-0687">Ribonucleoprotein</keyword>
<keyword id="KW-0689">Ribosomal protein</keyword>
<keyword id="KW-0694">RNA-binding</keyword>
<keyword id="KW-0699">rRNA-binding</keyword>
<organism>
    <name type="scientific">Spirogyra maxima</name>
    <name type="common">Green alga</name>
    <dbReference type="NCBI Taxonomy" id="3180"/>
    <lineage>
        <taxon>Eukaryota</taxon>
        <taxon>Viridiplantae</taxon>
        <taxon>Streptophyta</taxon>
        <taxon>Zygnematophyceae</taxon>
        <taxon>Zygnematophycidae</taxon>
        <taxon>Zygnematales</taxon>
        <taxon>Zygnemataceae</taxon>
        <taxon>Spirogyra</taxon>
    </lineage>
</organism>
<feature type="chain" id="PRO_0000125327" description="Large ribosomal subunit protein uL22c">
    <location>
        <begin position="1"/>
        <end position="119"/>
    </location>
</feature>
<comment type="function">
    <text evidence="1">This protein binds specifically to 23S rRNA.</text>
</comment>
<comment type="function">
    <text evidence="1">The globular domain of the protein is located near the polypeptide exit tunnel on the outside of the subunit, while an extended beta-hairpin is found that lines the wall of the exit tunnel in the center of the 70S ribosome.</text>
</comment>
<comment type="subunit">
    <text evidence="1">Part of the 50S ribosomal subunit.</text>
</comment>
<comment type="subcellular location">
    <subcellularLocation>
        <location>Plastid</location>
        <location>Chloroplast</location>
    </subcellularLocation>
</comment>
<comment type="similarity">
    <text evidence="2">Belongs to the universal ribosomal protein uL22 family.</text>
</comment>
<geneLocation type="chloroplast"/>
<proteinExistence type="inferred from homology"/>